<comment type="function">
    <text evidence="2">Component of the ubiquinol-cytochrome c reductase complex (complex III or cytochrome b-c1 complex) that is part of the mitochondrial respiratory chain. The b-c1 complex mediates electron transfer from ubiquinol to cytochrome c. Contributes to the generation of a proton gradient across the mitochondrial membrane that is then used for ATP synthesis.</text>
</comment>
<comment type="cofactor">
    <cofactor evidence="2">
        <name>heme b</name>
        <dbReference type="ChEBI" id="CHEBI:60344"/>
    </cofactor>
    <text evidence="2">Binds 2 heme b groups non-covalently.</text>
</comment>
<comment type="subunit">
    <text evidence="2">The cytochrome bc1 complex contains 3 respiratory subunits (MT-CYB, CYC1 and UQCRFS1), 2 core proteins (UQCRC1 and UQCRC2) and probably 6 low-molecular weight proteins.</text>
</comment>
<comment type="subcellular location">
    <subcellularLocation>
        <location evidence="2">Mitochondrion inner membrane</location>
        <topology evidence="2">Multi-pass membrane protein</topology>
    </subcellularLocation>
</comment>
<comment type="miscellaneous">
    <text evidence="1">Heme 1 (or BL or b562) is low-potential and absorbs at about 562 nm, and heme 2 (or BH or b566) is high-potential and absorbs at about 566 nm.</text>
</comment>
<comment type="similarity">
    <text evidence="3 4">Belongs to the cytochrome b family.</text>
</comment>
<comment type="caution">
    <text evidence="2">The full-length protein contains only eight transmembrane helices, not nine as predicted by bioinformatics tools.</text>
</comment>
<accession>Q9T9I7</accession>
<dbReference type="EMBL" id="AB018995">
    <property type="protein sequence ID" value="BAA88873.1"/>
    <property type="molecule type" value="Genomic_DNA"/>
</dbReference>
<dbReference type="SMR" id="Q9T9I7"/>
<dbReference type="GO" id="GO:0005743">
    <property type="term" value="C:mitochondrial inner membrane"/>
    <property type="evidence" value="ECO:0007669"/>
    <property type="project" value="UniProtKB-SubCell"/>
</dbReference>
<dbReference type="GO" id="GO:0045275">
    <property type="term" value="C:respiratory chain complex III"/>
    <property type="evidence" value="ECO:0007669"/>
    <property type="project" value="InterPro"/>
</dbReference>
<dbReference type="GO" id="GO:0046872">
    <property type="term" value="F:metal ion binding"/>
    <property type="evidence" value="ECO:0007669"/>
    <property type="project" value="UniProtKB-KW"/>
</dbReference>
<dbReference type="GO" id="GO:0008121">
    <property type="term" value="F:ubiquinol-cytochrome-c reductase activity"/>
    <property type="evidence" value="ECO:0007669"/>
    <property type="project" value="InterPro"/>
</dbReference>
<dbReference type="GO" id="GO:0006122">
    <property type="term" value="P:mitochondrial electron transport, ubiquinol to cytochrome c"/>
    <property type="evidence" value="ECO:0007669"/>
    <property type="project" value="TreeGrafter"/>
</dbReference>
<dbReference type="CDD" id="cd00290">
    <property type="entry name" value="cytochrome_b_C"/>
    <property type="match status" value="1"/>
</dbReference>
<dbReference type="CDD" id="cd00284">
    <property type="entry name" value="Cytochrome_b_N"/>
    <property type="match status" value="1"/>
</dbReference>
<dbReference type="FunFam" id="1.20.810.10:FF:000002">
    <property type="entry name" value="Cytochrome b"/>
    <property type="match status" value="1"/>
</dbReference>
<dbReference type="Gene3D" id="1.20.810.10">
    <property type="entry name" value="Cytochrome Bc1 Complex, Chain C"/>
    <property type="match status" value="1"/>
</dbReference>
<dbReference type="InterPro" id="IPR005798">
    <property type="entry name" value="Cyt_b/b6_C"/>
</dbReference>
<dbReference type="InterPro" id="IPR036150">
    <property type="entry name" value="Cyt_b/b6_C_sf"/>
</dbReference>
<dbReference type="InterPro" id="IPR005797">
    <property type="entry name" value="Cyt_b/b6_N"/>
</dbReference>
<dbReference type="InterPro" id="IPR027387">
    <property type="entry name" value="Cytb/b6-like_sf"/>
</dbReference>
<dbReference type="InterPro" id="IPR030689">
    <property type="entry name" value="Cytochrome_b"/>
</dbReference>
<dbReference type="InterPro" id="IPR048260">
    <property type="entry name" value="Cytochrome_b_C_euk/bac"/>
</dbReference>
<dbReference type="InterPro" id="IPR048259">
    <property type="entry name" value="Cytochrome_b_N_euk/bac"/>
</dbReference>
<dbReference type="InterPro" id="IPR016174">
    <property type="entry name" value="Di-haem_cyt_TM"/>
</dbReference>
<dbReference type="PANTHER" id="PTHR19271">
    <property type="entry name" value="CYTOCHROME B"/>
    <property type="match status" value="1"/>
</dbReference>
<dbReference type="PANTHER" id="PTHR19271:SF16">
    <property type="entry name" value="CYTOCHROME B"/>
    <property type="match status" value="1"/>
</dbReference>
<dbReference type="Pfam" id="PF00032">
    <property type="entry name" value="Cytochrom_B_C"/>
    <property type="match status" value="1"/>
</dbReference>
<dbReference type="Pfam" id="PF00033">
    <property type="entry name" value="Cytochrome_B"/>
    <property type="match status" value="1"/>
</dbReference>
<dbReference type="PIRSF" id="PIRSF038885">
    <property type="entry name" value="COB"/>
    <property type="match status" value="1"/>
</dbReference>
<dbReference type="SUPFAM" id="SSF81648">
    <property type="entry name" value="a domain/subunit of cytochrome bc1 complex (Ubiquinol-cytochrome c reductase)"/>
    <property type="match status" value="1"/>
</dbReference>
<dbReference type="SUPFAM" id="SSF81342">
    <property type="entry name" value="Transmembrane di-heme cytochromes"/>
    <property type="match status" value="1"/>
</dbReference>
<dbReference type="PROSITE" id="PS51003">
    <property type="entry name" value="CYTB_CTER"/>
    <property type="match status" value="1"/>
</dbReference>
<dbReference type="PROSITE" id="PS51002">
    <property type="entry name" value="CYTB_NTER"/>
    <property type="match status" value="1"/>
</dbReference>
<protein>
    <recommendedName>
        <fullName>Cytochrome b</fullName>
    </recommendedName>
    <alternativeName>
        <fullName>Complex III subunit 3</fullName>
    </alternativeName>
    <alternativeName>
        <fullName>Complex III subunit III</fullName>
    </alternativeName>
    <alternativeName>
        <fullName>Cytochrome b-c1 complex subunit 3</fullName>
    </alternativeName>
    <alternativeName>
        <fullName>Ubiquinol-cytochrome-c reductase complex cytochrome b subunit</fullName>
    </alternativeName>
</protein>
<organism>
    <name type="scientific">Apogon semilineatus</name>
    <name type="common">Half-lined cardinal</name>
    <dbReference type="NCBI Taxonomy" id="83883"/>
    <lineage>
        <taxon>Eukaryota</taxon>
        <taxon>Metazoa</taxon>
        <taxon>Chordata</taxon>
        <taxon>Craniata</taxon>
        <taxon>Vertebrata</taxon>
        <taxon>Euteleostomi</taxon>
        <taxon>Actinopterygii</taxon>
        <taxon>Neopterygii</taxon>
        <taxon>Teleostei</taxon>
        <taxon>Neoteleostei</taxon>
        <taxon>Acanthomorphata</taxon>
        <taxon>Gobiaria</taxon>
        <taxon>Kurtiformes</taxon>
        <taxon>Apogonoidei</taxon>
        <taxon>Apogonidae</taxon>
        <taxon>Apogoninae</taxon>
        <taxon>Apogon</taxon>
        <taxon>Apogon incertae sedis</taxon>
    </lineage>
</organism>
<keyword id="KW-0249">Electron transport</keyword>
<keyword id="KW-0349">Heme</keyword>
<keyword id="KW-0408">Iron</keyword>
<keyword id="KW-0472">Membrane</keyword>
<keyword id="KW-0479">Metal-binding</keyword>
<keyword id="KW-0496">Mitochondrion</keyword>
<keyword id="KW-0999">Mitochondrion inner membrane</keyword>
<keyword id="KW-0679">Respiratory chain</keyword>
<keyword id="KW-0812">Transmembrane</keyword>
<keyword id="KW-1133">Transmembrane helix</keyword>
<keyword id="KW-0813">Transport</keyword>
<keyword id="KW-0830">Ubiquinone</keyword>
<proteinExistence type="inferred from homology"/>
<name>CYB_APOSE</name>
<gene>
    <name type="primary">mt-cyb</name>
    <name type="synonym">cob</name>
    <name type="synonym">cytb</name>
    <name type="synonym">mtcyb</name>
</gene>
<geneLocation type="mitochondrion"/>
<feature type="chain" id="PRO_0000060609" description="Cytochrome b">
    <location>
        <begin position="1"/>
        <end position="380"/>
    </location>
</feature>
<feature type="transmembrane region" description="Helical" evidence="2">
    <location>
        <begin position="33"/>
        <end position="53"/>
    </location>
</feature>
<feature type="transmembrane region" description="Helical" evidence="2">
    <location>
        <begin position="77"/>
        <end position="98"/>
    </location>
</feature>
<feature type="transmembrane region" description="Helical" evidence="2">
    <location>
        <begin position="113"/>
        <end position="133"/>
    </location>
</feature>
<feature type="transmembrane region" description="Helical" evidence="2">
    <location>
        <begin position="178"/>
        <end position="198"/>
    </location>
</feature>
<feature type="transmembrane region" description="Helical" evidence="2">
    <location>
        <begin position="226"/>
        <end position="246"/>
    </location>
</feature>
<feature type="transmembrane region" description="Helical" evidence="2">
    <location>
        <begin position="288"/>
        <end position="308"/>
    </location>
</feature>
<feature type="transmembrane region" description="Helical" evidence="2">
    <location>
        <begin position="320"/>
        <end position="340"/>
    </location>
</feature>
<feature type="transmembrane region" description="Helical" evidence="2">
    <location>
        <begin position="347"/>
        <end position="367"/>
    </location>
</feature>
<feature type="binding site" description="axial binding residue" evidence="2">
    <location>
        <position position="83"/>
    </location>
    <ligand>
        <name>heme b</name>
        <dbReference type="ChEBI" id="CHEBI:60344"/>
        <label>b562</label>
    </ligand>
    <ligandPart>
        <name>Fe</name>
        <dbReference type="ChEBI" id="CHEBI:18248"/>
    </ligandPart>
</feature>
<feature type="binding site" description="axial binding residue" evidence="2">
    <location>
        <position position="97"/>
    </location>
    <ligand>
        <name>heme b</name>
        <dbReference type="ChEBI" id="CHEBI:60344"/>
        <label>b566</label>
    </ligand>
    <ligandPart>
        <name>Fe</name>
        <dbReference type="ChEBI" id="CHEBI:18248"/>
    </ligandPart>
</feature>
<feature type="binding site" description="axial binding residue" evidence="2">
    <location>
        <position position="182"/>
    </location>
    <ligand>
        <name>heme b</name>
        <dbReference type="ChEBI" id="CHEBI:60344"/>
        <label>b562</label>
    </ligand>
    <ligandPart>
        <name>Fe</name>
        <dbReference type="ChEBI" id="CHEBI:18248"/>
    </ligandPart>
</feature>
<feature type="binding site" description="axial binding residue" evidence="2">
    <location>
        <position position="196"/>
    </location>
    <ligand>
        <name>heme b</name>
        <dbReference type="ChEBI" id="CHEBI:60344"/>
        <label>b566</label>
    </ligand>
    <ligandPart>
        <name>Fe</name>
        <dbReference type="ChEBI" id="CHEBI:18248"/>
    </ligandPart>
</feature>
<feature type="binding site" evidence="2">
    <location>
        <position position="201"/>
    </location>
    <ligand>
        <name>a ubiquinone</name>
        <dbReference type="ChEBI" id="CHEBI:16389"/>
    </ligand>
</feature>
<reference key="1">
    <citation type="book" date="1999" name="The biology of biodiversity">
        <title>Mitochondrial molecular clocks and the origin of euteleostean biodiversity: familial radiation of perciforms may have predated the Cretaceous/Tertiary boundary.</title>
        <editorList>
            <person name="Kato M."/>
        </editorList>
        <authorList>
            <person name="Kumazawa Y."/>
            <person name="Yamaguchi M."/>
            <person name="Nishida M."/>
        </authorList>
    </citation>
    <scope>NUCLEOTIDE SEQUENCE [GENOMIC DNA]</scope>
</reference>
<evidence type="ECO:0000250" key="1"/>
<evidence type="ECO:0000250" key="2">
    <source>
        <dbReference type="UniProtKB" id="P00157"/>
    </source>
</evidence>
<evidence type="ECO:0000255" key="3">
    <source>
        <dbReference type="PROSITE-ProRule" id="PRU00967"/>
    </source>
</evidence>
<evidence type="ECO:0000255" key="4">
    <source>
        <dbReference type="PROSITE-ProRule" id="PRU00968"/>
    </source>
</evidence>
<sequence length="380" mass="42436">MANLRKTHPLLKIANDALVDLPAPSNISIWWNFGSLLGLCLAIQLLTGLFLAMHYTADIATAFSSVAHICRDVNFGWLIRNMHANGASFFFICIYLHIGRGLYYGSYMFKETWNVGVVLLLLVMMTAFVGYVLPWGQMSFWGATVITNLLSAVPYVGNTLVQWIWGGFSVDNATLTRFFAFHFLLPFVIAAATLLHLLFLHETGSNNPVGLNPNADKIPFHPYFTYKDLLGFIVLFLALASLALFSPNYLGDPDNFTPANPLVTPPHIKPEWYFLFAYAILRSIPNKLGGVLALLASILILMLVPILHTSKHRSLTFRPFSQIIFWTLVADVAILTWIGGMPVEDPYIIIGQIASALYFLIFLVFFPLSGWLENKLLGLS</sequence>